<accession>Q39613</accession>
<accession>I3QBM4</accession>
<evidence type="ECO:0000250" key="1">
    <source>
        <dbReference type="UniProtKB" id="Q8LDP4"/>
    </source>
</evidence>
<evidence type="ECO:0000255" key="2">
    <source>
        <dbReference type="PROSITE-ProRule" id="PRU00156"/>
    </source>
</evidence>
<evidence type="ECO:0000255" key="3">
    <source>
        <dbReference type="RuleBase" id="RU363019"/>
    </source>
</evidence>
<evidence type="ECO:0000269" key="4">
    <source>
    </source>
</evidence>
<evidence type="ECO:0000303" key="5">
    <source>
    </source>
</evidence>
<evidence type="ECO:0000303" key="6">
    <source ref="1"/>
</evidence>
<evidence type="ECO:0000305" key="7"/>
<evidence type="ECO:0000312" key="8">
    <source>
        <dbReference type="EMBL" id="AFI56997.1"/>
    </source>
</evidence>
<evidence type="ECO:0007829" key="9">
    <source>
        <dbReference type="PDB" id="2MC9"/>
    </source>
</evidence>
<comment type="function">
    <text evidence="1 4">PPIases accelerate the folding of proteins (By similarity). It catalyzes the cis-trans isomerization of proline imidic peptide bonds in oligopeptides (PubMed:24939849).</text>
</comment>
<comment type="catalytic activity">
    <reaction evidence="4">
        <text>[protein]-peptidylproline (omega=180) = [protein]-peptidylproline (omega=0)</text>
        <dbReference type="Rhea" id="RHEA:16237"/>
        <dbReference type="Rhea" id="RHEA-COMP:10747"/>
        <dbReference type="Rhea" id="RHEA-COMP:10748"/>
        <dbReference type="ChEBI" id="CHEBI:83833"/>
        <dbReference type="ChEBI" id="CHEBI:83834"/>
        <dbReference type="EC" id="5.2.1.8"/>
    </reaction>
</comment>
<comment type="activity regulation">
    <text>Binds cyclosporin A (CsA). CsA mediates some of its effects via an inhibitory action on PPIase.</text>
</comment>
<comment type="subcellular location">
    <subcellularLocation>
        <location evidence="4">Cytoplasm</location>
    </subcellularLocation>
</comment>
<comment type="tissue specificity">
    <text evidence="4">Expressed in pollen.</text>
</comment>
<comment type="PTM">
    <text evidence="4">Not glycosylated.</text>
</comment>
<comment type="allergen">
    <text evidence="4">Causes an allergic reaction in human. Binds to IgE in 100% of 15 patients tested allergic to periwinkle C.roseus pollen. Causes release of beta-hexosaminidase from rat basophil leukemia (RBL) cells.</text>
</comment>
<comment type="similarity">
    <text evidence="7">Belongs to the cyclophilin-type PPIase family.</text>
</comment>
<name>CYPH_CATRO</name>
<dbReference type="EC" id="5.2.1.8" evidence="3 4"/>
<dbReference type="EMBL" id="X85185">
    <property type="protein sequence ID" value="CAA59468.1"/>
    <property type="molecule type" value="mRNA"/>
</dbReference>
<dbReference type="EMBL" id="JF973325">
    <property type="protein sequence ID" value="AFI56997.1"/>
    <property type="molecule type" value="mRNA"/>
</dbReference>
<dbReference type="PIR" id="T10056">
    <property type="entry name" value="T10056"/>
</dbReference>
<dbReference type="PDB" id="2MC9">
    <property type="method" value="NMR"/>
    <property type="chains" value="A=1-172"/>
</dbReference>
<dbReference type="PDBsum" id="2MC9"/>
<dbReference type="BMRB" id="Q39613"/>
<dbReference type="SMR" id="Q39613"/>
<dbReference type="Allergome" id="2900">
    <property type="allergen name" value="Cat r 1"/>
</dbReference>
<dbReference type="Allergome" id="3181">
    <property type="allergen name" value="Cat r 1.0101"/>
</dbReference>
<dbReference type="OrthoDB" id="193499at2759"/>
<dbReference type="EvolutionaryTrace" id="Q39613"/>
<dbReference type="GO" id="GO:0005737">
    <property type="term" value="C:cytoplasm"/>
    <property type="evidence" value="ECO:0000314"/>
    <property type="project" value="UniProtKB"/>
</dbReference>
<dbReference type="GO" id="GO:0005829">
    <property type="term" value="C:cytosol"/>
    <property type="evidence" value="ECO:0007669"/>
    <property type="project" value="TreeGrafter"/>
</dbReference>
<dbReference type="GO" id="GO:0005886">
    <property type="term" value="C:plasma membrane"/>
    <property type="evidence" value="ECO:0007669"/>
    <property type="project" value="TreeGrafter"/>
</dbReference>
<dbReference type="GO" id="GO:0016018">
    <property type="term" value="F:cyclosporin A binding"/>
    <property type="evidence" value="ECO:0007669"/>
    <property type="project" value="TreeGrafter"/>
</dbReference>
<dbReference type="GO" id="GO:0003755">
    <property type="term" value="F:peptidyl-prolyl cis-trans isomerase activity"/>
    <property type="evidence" value="ECO:0000314"/>
    <property type="project" value="UniProtKB"/>
</dbReference>
<dbReference type="GO" id="GO:0006457">
    <property type="term" value="P:protein folding"/>
    <property type="evidence" value="ECO:0007669"/>
    <property type="project" value="InterPro"/>
</dbReference>
<dbReference type="GO" id="GO:0061083">
    <property type="term" value="P:regulation of protein refolding"/>
    <property type="evidence" value="ECO:0000250"/>
    <property type="project" value="UniProtKB"/>
</dbReference>
<dbReference type="CDD" id="cd01926">
    <property type="entry name" value="cyclophilin_ABH_like"/>
    <property type="match status" value="1"/>
</dbReference>
<dbReference type="FunFam" id="2.40.100.10:FF:000002">
    <property type="entry name" value="Peptidyl-prolyl cis-trans isomerase"/>
    <property type="match status" value="1"/>
</dbReference>
<dbReference type="Gene3D" id="2.40.100.10">
    <property type="entry name" value="Cyclophilin-like"/>
    <property type="match status" value="1"/>
</dbReference>
<dbReference type="InterPro" id="IPR029000">
    <property type="entry name" value="Cyclophilin-like_dom_sf"/>
</dbReference>
<dbReference type="InterPro" id="IPR024936">
    <property type="entry name" value="Cyclophilin-type_PPIase"/>
</dbReference>
<dbReference type="InterPro" id="IPR020892">
    <property type="entry name" value="Cyclophilin-type_PPIase_CS"/>
</dbReference>
<dbReference type="InterPro" id="IPR002130">
    <property type="entry name" value="Cyclophilin-type_PPIase_dom"/>
</dbReference>
<dbReference type="PANTHER" id="PTHR11071">
    <property type="entry name" value="PEPTIDYL-PROLYL CIS-TRANS ISOMERASE"/>
    <property type="match status" value="1"/>
</dbReference>
<dbReference type="PANTHER" id="PTHR11071:SF561">
    <property type="entry name" value="PEPTIDYL-PROLYL CIS-TRANS ISOMERASE D-RELATED"/>
    <property type="match status" value="1"/>
</dbReference>
<dbReference type="Pfam" id="PF00160">
    <property type="entry name" value="Pro_isomerase"/>
    <property type="match status" value="1"/>
</dbReference>
<dbReference type="PIRSF" id="PIRSF001467">
    <property type="entry name" value="Peptidylpro_ismrse"/>
    <property type="match status" value="1"/>
</dbReference>
<dbReference type="PRINTS" id="PR00153">
    <property type="entry name" value="CSAPPISMRASE"/>
</dbReference>
<dbReference type="SUPFAM" id="SSF50891">
    <property type="entry name" value="Cyclophilin-like"/>
    <property type="match status" value="1"/>
</dbReference>
<dbReference type="PROSITE" id="PS00170">
    <property type="entry name" value="CSA_PPIASE_1"/>
    <property type="match status" value="1"/>
</dbReference>
<dbReference type="PROSITE" id="PS50072">
    <property type="entry name" value="CSA_PPIASE_2"/>
    <property type="match status" value="1"/>
</dbReference>
<feature type="initiator methionine" description="Removed" evidence="4">
    <location>
        <position position="1"/>
    </location>
</feature>
<feature type="chain" id="PRO_0000064143" description="Peptidyl-prolyl cis-trans isomerase">
    <location>
        <begin position="2"/>
        <end position="172"/>
    </location>
</feature>
<feature type="domain" description="PPIase cyclophilin-type" evidence="2">
    <location>
        <begin position="7"/>
        <end position="170"/>
    </location>
</feature>
<feature type="mutagenesis site" description="No effect in binding to IgE." evidence="4">
    <location>
        <begin position="48"/>
        <end position="54"/>
    </location>
</feature>
<feature type="strand" evidence="9">
    <location>
        <begin position="5"/>
        <end position="12"/>
    </location>
</feature>
<feature type="strand" evidence="9">
    <location>
        <begin position="15"/>
        <end position="24"/>
    </location>
</feature>
<feature type="strand" evidence="9">
    <location>
        <begin position="26"/>
        <end position="29"/>
    </location>
</feature>
<feature type="helix" evidence="9">
    <location>
        <begin position="30"/>
        <end position="41"/>
    </location>
</feature>
<feature type="turn" evidence="9">
    <location>
        <begin position="42"/>
        <end position="44"/>
    </location>
</feature>
<feature type="turn" evidence="9">
    <location>
        <begin position="48"/>
        <end position="50"/>
    </location>
</feature>
<feature type="strand" evidence="9">
    <location>
        <begin position="65"/>
        <end position="67"/>
    </location>
</feature>
<feature type="strand" evidence="9">
    <location>
        <begin position="77"/>
        <end position="80"/>
    </location>
</feature>
<feature type="strand" evidence="9">
    <location>
        <begin position="100"/>
        <end position="107"/>
    </location>
</feature>
<feature type="strand" evidence="9">
    <location>
        <begin position="110"/>
        <end position="113"/>
    </location>
</feature>
<feature type="strand" evidence="9">
    <location>
        <begin position="117"/>
        <end position="124"/>
    </location>
</feature>
<feature type="strand" evidence="9">
    <location>
        <begin position="134"/>
        <end position="139"/>
    </location>
</feature>
<feature type="helix" evidence="9">
    <location>
        <begin position="143"/>
        <end position="151"/>
    </location>
</feature>
<feature type="strand" evidence="9">
    <location>
        <begin position="163"/>
        <end position="170"/>
    </location>
</feature>
<reference key="1">
    <citation type="online journal article" date="1995" name="Plant Gene Register">
        <title>Isolation of a full-length cDNA encoding a cytosolic cyclophilin from Periwinkle (Catharanthus roseus).</title>
        <authorList>
            <person name="Clastre M."/>
            <person name="Maaroufi H."/>
            <person name="Andreu F."/>
            <person name="Chenieux J.-C."/>
            <person name="Rideau M."/>
            <person name="Hamdi S."/>
        </authorList>
        <locator>PGR95-100</locator>
    </citation>
    <scope>NUCLEOTIDE SEQUENCE [MRNA]</scope>
</reference>
<reference evidence="8" key="2">
    <citation type="journal article" date="2014" name="J. Biol. Chem.">
        <title>Primary identification, biochemical characterization, and immunologic properties of the allergenic pollen cyclophilin cat R 1.</title>
        <authorList>
            <person name="Ghosh D."/>
            <person name="Mueller G.A."/>
            <person name="Schramm G."/>
            <person name="Edwards L.L."/>
            <person name="Petersen A."/>
            <person name="London R.E."/>
            <person name="Haas H."/>
            <person name="Gupta Bhattacharya S."/>
        </authorList>
    </citation>
    <scope>NUCLEOTIDE SEQUENCE [MRNA]</scope>
    <scope>PROTEIN SEQUENCE OF 2-14</scope>
    <scope>STRUCTURE BY NMR</scope>
    <scope>FUNCTION</scope>
    <scope>CATALYTIC ACTIVITY</scope>
    <scope>SUBCELLULAR LOCATION</scope>
    <scope>TISSUE SPECIFICITY</scope>
    <scope>PTM</scope>
    <scope>ALLERGEN</scope>
    <scope>MUTAGENESIS OF 48-ARG--HIS-54</scope>
    <scope>CIRCULAR DICHROISM ANALYSIS</scope>
</reference>
<proteinExistence type="evidence at protein level"/>
<protein>
    <recommendedName>
        <fullName evidence="3 5">Peptidyl-prolyl cis-trans isomerase</fullName>
        <shortName evidence="3 5">PPIase</shortName>
        <ecNumber evidence="3 4">5.2.1.8</ecNumber>
    </recommendedName>
    <alternativeName>
        <fullName evidence="5 6">Cyclophilin</fullName>
        <shortName evidence="5">Cyp</shortName>
    </alternativeName>
    <alternativeName>
        <fullName>Cyclosporin A-binding protein</fullName>
    </alternativeName>
    <alternativeName>
        <fullName>Rotamase</fullName>
    </alternativeName>
    <allergenName evidence="5">Cat r 1</allergenName>
</protein>
<sequence length="172" mass="18285">MPNPRVFFDMSVGGQPAGRIVMELFADTTPRTAENFRALCTGEKGTGRSGKPLHYKDSSFHRVIPGFMCQGGDFTAGNGTGGESIYGAKFADENFIKKHTGPGILSMANAGPNTNGSQFFICTAKTEWLDGKHVVFGQVVEGMDVVKAIEKVGSSSGRTAKKVVVEDCGQLS</sequence>
<organism>
    <name type="scientific">Catharanthus roseus</name>
    <name type="common">Madagascar periwinkle</name>
    <name type="synonym">Vinca rosea</name>
    <dbReference type="NCBI Taxonomy" id="4058"/>
    <lineage>
        <taxon>Eukaryota</taxon>
        <taxon>Viridiplantae</taxon>
        <taxon>Streptophyta</taxon>
        <taxon>Embryophyta</taxon>
        <taxon>Tracheophyta</taxon>
        <taxon>Spermatophyta</taxon>
        <taxon>Magnoliopsida</taxon>
        <taxon>eudicotyledons</taxon>
        <taxon>Gunneridae</taxon>
        <taxon>Pentapetalae</taxon>
        <taxon>asterids</taxon>
        <taxon>lamiids</taxon>
        <taxon>Gentianales</taxon>
        <taxon>Apocynaceae</taxon>
        <taxon>Rauvolfioideae</taxon>
        <taxon>Vinceae</taxon>
        <taxon>Catharanthinae</taxon>
        <taxon>Catharanthus</taxon>
    </lineage>
</organism>
<gene>
    <name type="primary">PCKR1</name>
</gene>
<keyword id="KW-0002">3D-structure</keyword>
<keyword id="KW-0020">Allergen</keyword>
<keyword id="KW-0143">Chaperone</keyword>
<keyword id="KW-0963">Cytoplasm</keyword>
<keyword id="KW-0903">Direct protein sequencing</keyword>
<keyword id="KW-0413">Isomerase</keyword>
<keyword id="KW-0697">Rotamase</keyword>